<sequence length="241" mass="26758">MTEGEGRIQLEPSWKARVGEWLLQPQMQELSAFLRQRKAANARVFPPGPQIFAAFDATPFEQVKVVVLGQDPYHGEGQAHGLCFSVLPGVPVPPSLLNIYKEIQDDLGIPRPDHGYLMPWARQGVLLLNAVLTVEQGRAGAHQNKGWEGFTDHVVETLNREREGLVFLLWGSYAQSKGKVIDQARHRVFKAPHPSPLSAHRGFLGCKHFSKTNEHLQRRGLSPIDWSLPSRAALDLSLAGG</sequence>
<organism>
    <name type="scientific">Xanthomonas campestris pv. campestris (strain B100)</name>
    <dbReference type="NCBI Taxonomy" id="509169"/>
    <lineage>
        <taxon>Bacteria</taxon>
        <taxon>Pseudomonadati</taxon>
        <taxon>Pseudomonadota</taxon>
        <taxon>Gammaproteobacteria</taxon>
        <taxon>Lysobacterales</taxon>
        <taxon>Lysobacteraceae</taxon>
        <taxon>Xanthomonas</taxon>
    </lineage>
</organism>
<reference key="1">
    <citation type="journal article" date="2008" name="J. Biotechnol.">
        <title>The genome of Xanthomonas campestris pv. campestris B100 and its use for the reconstruction of metabolic pathways involved in xanthan biosynthesis.</title>
        <authorList>
            <person name="Vorhoelter F.-J."/>
            <person name="Schneiker S."/>
            <person name="Goesmann A."/>
            <person name="Krause L."/>
            <person name="Bekel T."/>
            <person name="Kaiser O."/>
            <person name="Linke B."/>
            <person name="Patschkowski T."/>
            <person name="Rueckert C."/>
            <person name="Schmid J."/>
            <person name="Sidhu V.K."/>
            <person name="Sieber V."/>
            <person name="Tauch A."/>
            <person name="Watt S.A."/>
            <person name="Weisshaar B."/>
            <person name="Becker A."/>
            <person name="Niehaus K."/>
            <person name="Puehler A."/>
        </authorList>
    </citation>
    <scope>NUCLEOTIDE SEQUENCE [LARGE SCALE GENOMIC DNA]</scope>
    <source>
        <strain>B100</strain>
    </source>
</reference>
<dbReference type="EC" id="3.2.2.27" evidence="1"/>
<dbReference type="EMBL" id="AM920689">
    <property type="protein sequence ID" value="CAP53321.1"/>
    <property type="molecule type" value="Genomic_DNA"/>
</dbReference>
<dbReference type="SMR" id="B0RWT2"/>
<dbReference type="KEGG" id="xca:xcc-b100_3954"/>
<dbReference type="HOGENOM" id="CLU_032162_3_1_6"/>
<dbReference type="Proteomes" id="UP000001188">
    <property type="component" value="Chromosome"/>
</dbReference>
<dbReference type="GO" id="GO:0005737">
    <property type="term" value="C:cytoplasm"/>
    <property type="evidence" value="ECO:0007669"/>
    <property type="project" value="UniProtKB-SubCell"/>
</dbReference>
<dbReference type="GO" id="GO:0004844">
    <property type="term" value="F:uracil DNA N-glycosylase activity"/>
    <property type="evidence" value="ECO:0007669"/>
    <property type="project" value="UniProtKB-UniRule"/>
</dbReference>
<dbReference type="GO" id="GO:0097510">
    <property type="term" value="P:base-excision repair, AP site formation via deaminated base removal"/>
    <property type="evidence" value="ECO:0007669"/>
    <property type="project" value="TreeGrafter"/>
</dbReference>
<dbReference type="CDD" id="cd10027">
    <property type="entry name" value="UDG-F1-like"/>
    <property type="match status" value="1"/>
</dbReference>
<dbReference type="FunFam" id="3.40.470.10:FF:000001">
    <property type="entry name" value="Uracil-DNA glycosylase"/>
    <property type="match status" value="1"/>
</dbReference>
<dbReference type="Gene3D" id="3.40.470.10">
    <property type="entry name" value="Uracil-DNA glycosylase-like domain"/>
    <property type="match status" value="1"/>
</dbReference>
<dbReference type="HAMAP" id="MF_00148">
    <property type="entry name" value="UDG"/>
    <property type="match status" value="1"/>
</dbReference>
<dbReference type="InterPro" id="IPR002043">
    <property type="entry name" value="UDG_fam1"/>
</dbReference>
<dbReference type="InterPro" id="IPR018085">
    <property type="entry name" value="Ura-DNA_Glyclase_AS"/>
</dbReference>
<dbReference type="InterPro" id="IPR005122">
    <property type="entry name" value="Uracil-DNA_glycosylase-like"/>
</dbReference>
<dbReference type="InterPro" id="IPR036895">
    <property type="entry name" value="Uracil-DNA_glycosylase-like_sf"/>
</dbReference>
<dbReference type="NCBIfam" id="NF003588">
    <property type="entry name" value="PRK05254.1-1"/>
    <property type="match status" value="1"/>
</dbReference>
<dbReference type="NCBIfam" id="NF003589">
    <property type="entry name" value="PRK05254.1-2"/>
    <property type="match status" value="1"/>
</dbReference>
<dbReference type="NCBIfam" id="NF003591">
    <property type="entry name" value="PRK05254.1-4"/>
    <property type="match status" value="1"/>
</dbReference>
<dbReference type="NCBIfam" id="NF003592">
    <property type="entry name" value="PRK05254.1-5"/>
    <property type="match status" value="1"/>
</dbReference>
<dbReference type="NCBIfam" id="TIGR00628">
    <property type="entry name" value="ung"/>
    <property type="match status" value="1"/>
</dbReference>
<dbReference type="PANTHER" id="PTHR11264">
    <property type="entry name" value="URACIL-DNA GLYCOSYLASE"/>
    <property type="match status" value="1"/>
</dbReference>
<dbReference type="PANTHER" id="PTHR11264:SF0">
    <property type="entry name" value="URACIL-DNA GLYCOSYLASE"/>
    <property type="match status" value="1"/>
</dbReference>
<dbReference type="Pfam" id="PF03167">
    <property type="entry name" value="UDG"/>
    <property type="match status" value="1"/>
</dbReference>
<dbReference type="SMART" id="SM00986">
    <property type="entry name" value="UDG"/>
    <property type="match status" value="1"/>
</dbReference>
<dbReference type="SMART" id="SM00987">
    <property type="entry name" value="UreE_C"/>
    <property type="match status" value="1"/>
</dbReference>
<dbReference type="SUPFAM" id="SSF52141">
    <property type="entry name" value="Uracil-DNA glycosylase-like"/>
    <property type="match status" value="1"/>
</dbReference>
<dbReference type="PROSITE" id="PS00130">
    <property type="entry name" value="U_DNA_GLYCOSYLASE"/>
    <property type="match status" value="1"/>
</dbReference>
<keyword id="KW-0963">Cytoplasm</keyword>
<keyword id="KW-0227">DNA damage</keyword>
<keyword id="KW-0234">DNA repair</keyword>
<keyword id="KW-0378">Hydrolase</keyword>
<evidence type="ECO:0000255" key="1">
    <source>
        <dbReference type="HAMAP-Rule" id="MF_00148"/>
    </source>
</evidence>
<feature type="chain" id="PRO_1000096615" description="Uracil-DNA glycosylase">
    <location>
        <begin position="1"/>
        <end position="241"/>
    </location>
</feature>
<feature type="active site" description="Proton acceptor" evidence="1">
    <location>
        <position position="71"/>
    </location>
</feature>
<name>UNG_XANCB</name>
<comment type="function">
    <text evidence="1">Excises uracil residues from the DNA which can arise as a result of misincorporation of dUMP residues by DNA polymerase or due to deamination of cytosine.</text>
</comment>
<comment type="catalytic activity">
    <reaction evidence="1">
        <text>Hydrolyzes single-stranded DNA or mismatched double-stranded DNA and polynucleotides, releasing free uracil.</text>
        <dbReference type="EC" id="3.2.2.27"/>
    </reaction>
</comment>
<comment type="subcellular location">
    <subcellularLocation>
        <location evidence="1">Cytoplasm</location>
    </subcellularLocation>
</comment>
<comment type="similarity">
    <text evidence="1">Belongs to the uracil-DNA glycosylase (UDG) superfamily. UNG family.</text>
</comment>
<protein>
    <recommendedName>
        <fullName evidence="1">Uracil-DNA glycosylase</fullName>
        <shortName evidence="1">UDG</shortName>
        <ecNumber evidence="1">3.2.2.27</ecNumber>
    </recommendedName>
</protein>
<proteinExistence type="inferred from homology"/>
<accession>B0RWT2</accession>
<gene>
    <name evidence="1" type="primary">ung</name>
    <name type="ordered locus">xcc-b100_3954</name>
</gene>